<proteinExistence type="evidence at transcript level"/>
<comment type="function">
    <text>Cadherins are calcium-dependent cell adhesion proteins. They preferentially interact with themselves in a homophilic manner in connecting cells; cadherins may thus contribute to the sorting of heterogeneous cell types.</text>
</comment>
<comment type="subunit">
    <text evidence="1">Interacts with CDCP1 and CTNNB1.</text>
</comment>
<comment type="subcellular location">
    <subcellularLocation>
        <location>Cell membrane</location>
        <topology>Single-pass type I membrane protein</topology>
    </subcellularLocation>
</comment>
<comment type="domain">
    <text evidence="1">Three calcium ions are usually bound at the interface of each cadherin domain and rigidify the connections, imparting a strong curvature to the full-length ectodomain.</text>
</comment>
<sequence length="491" mass="54208">ENTVSHEVQRLTVTDLDAPNSPAWRATYRIVGGDNGDHFTITTDPESNQGILTTQKGLDFEAKTQHTLYVEVINEVPFVVKLPTSTATVVVLVEDVNEPPVFVPPSKVIEIQEGISTGEPICAYTARDPDKGSQKISYHILRDPAGWLAMDPDSGQVTAAGVLDREDEQFVRNNIYEVMVLATDDGSPPTTGTGTLLLTLMDINDHGPVPEPRQITICNQSPVPQVLNITDKDLSPHTAPFQAQLTHDSDVYWTAEVNEKGDAVALSLKKFLKQGEYDVHLSLSDHGNKEQLTVIRATVCDCHGNMVTCRDPWTWGFLLPILGAALALLLLLLVLLFLVRKKRKIKEPLLLPEDDTRDNVFYYGEEGGGEEDQDYDITQLHRGLEARPEVVLRNDVAPSFIPTPMYRPRPANPDEIGNFIIENLKAANTDPTAPPYDSLLVFDYEGSGSDAASLSSLTSSTSDQDQDYNYLNEWGSRFKKLADMYGGGQDD</sequence>
<dbReference type="EMBL" id="X53614">
    <property type="protein sequence ID" value="CAA37676.1"/>
    <property type="molecule type" value="mRNA"/>
</dbReference>
<dbReference type="PIR" id="S11694">
    <property type="entry name" value="IJBOCP"/>
</dbReference>
<dbReference type="RefSeq" id="NP_001231534.1">
    <property type="nucleotide sequence ID" value="NM_001244605.1"/>
</dbReference>
<dbReference type="SMR" id="P19535"/>
<dbReference type="STRING" id="9913.ENSBTAP00000042970"/>
<dbReference type="GlyCosmos" id="P19535">
    <property type="glycosylation" value="1 site, No reported glycans"/>
</dbReference>
<dbReference type="GlyGen" id="P19535">
    <property type="glycosylation" value="1 site"/>
</dbReference>
<dbReference type="PaxDb" id="9913-ENSBTAP00000042970"/>
<dbReference type="GeneID" id="281063"/>
<dbReference type="KEGG" id="bta:281063"/>
<dbReference type="CTD" id="1001"/>
<dbReference type="eggNOG" id="KOG3594">
    <property type="taxonomic scope" value="Eukaryota"/>
</dbReference>
<dbReference type="HOGENOM" id="CLU_005284_2_1_1"/>
<dbReference type="InParanoid" id="P19535"/>
<dbReference type="OrthoDB" id="6079678at2759"/>
<dbReference type="Proteomes" id="UP000009136">
    <property type="component" value="Unplaced"/>
</dbReference>
<dbReference type="GO" id="GO:0005912">
    <property type="term" value="C:adherens junction"/>
    <property type="evidence" value="ECO:0000318"/>
    <property type="project" value="GO_Central"/>
</dbReference>
<dbReference type="GO" id="GO:0016342">
    <property type="term" value="C:catenin complex"/>
    <property type="evidence" value="ECO:0000318"/>
    <property type="project" value="GO_Central"/>
</dbReference>
<dbReference type="GO" id="GO:0005737">
    <property type="term" value="C:cytoplasm"/>
    <property type="evidence" value="ECO:0000318"/>
    <property type="project" value="GO_Central"/>
</dbReference>
<dbReference type="GO" id="GO:0008013">
    <property type="term" value="F:beta-catenin binding"/>
    <property type="evidence" value="ECO:0000318"/>
    <property type="project" value="GO_Central"/>
</dbReference>
<dbReference type="GO" id="GO:0045296">
    <property type="term" value="F:cadherin binding"/>
    <property type="evidence" value="ECO:0000318"/>
    <property type="project" value="GO_Central"/>
</dbReference>
<dbReference type="GO" id="GO:0005509">
    <property type="term" value="F:calcium ion binding"/>
    <property type="evidence" value="ECO:0007669"/>
    <property type="project" value="InterPro"/>
</dbReference>
<dbReference type="GO" id="GO:0034332">
    <property type="term" value="P:adherens junction organization"/>
    <property type="evidence" value="ECO:0000318"/>
    <property type="project" value="GO_Central"/>
</dbReference>
<dbReference type="GO" id="GO:0016339">
    <property type="term" value="P:calcium-dependent cell-cell adhesion via plasma membrane cell adhesion molecules"/>
    <property type="evidence" value="ECO:0000318"/>
    <property type="project" value="GO_Central"/>
</dbReference>
<dbReference type="GO" id="GO:0016477">
    <property type="term" value="P:cell migration"/>
    <property type="evidence" value="ECO:0000318"/>
    <property type="project" value="GO_Central"/>
</dbReference>
<dbReference type="GO" id="GO:0000902">
    <property type="term" value="P:cell morphogenesis"/>
    <property type="evidence" value="ECO:0000318"/>
    <property type="project" value="GO_Central"/>
</dbReference>
<dbReference type="GO" id="GO:0044331">
    <property type="term" value="P:cell-cell adhesion mediated by cadherin"/>
    <property type="evidence" value="ECO:0000318"/>
    <property type="project" value="GO_Central"/>
</dbReference>
<dbReference type="GO" id="GO:0007043">
    <property type="term" value="P:cell-cell junction assembly"/>
    <property type="evidence" value="ECO:0000318"/>
    <property type="project" value="GO_Central"/>
</dbReference>
<dbReference type="GO" id="GO:0007156">
    <property type="term" value="P:homophilic cell adhesion via plasma membrane adhesion molecules"/>
    <property type="evidence" value="ECO:0007669"/>
    <property type="project" value="InterPro"/>
</dbReference>
<dbReference type="CDD" id="cd11304">
    <property type="entry name" value="Cadherin_repeat"/>
    <property type="match status" value="2"/>
</dbReference>
<dbReference type="FunFam" id="2.60.40.60:FF:000019">
    <property type="entry name" value="Cadherin 2"/>
    <property type="match status" value="1"/>
</dbReference>
<dbReference type="FunFam" id="2.60.40.60:FF:000027">
    <property type="entry name" value="Cadherin 2"/>
    <property type="match status" value="1"/>
</dbReference>
<dbReference type="FunFam" id="4.10.900.10:FF:000001">
    <property type="entry name" value="Cadherin 2"/>
    <property type="match status" value="1"/>
</dbReference>
<dbReference type="FunFam" id="2.60.40.60:FF:000031">
    <property type="entry name" value="Cadherin 3"/>
    <property type="match status" value="1"/>
</dbReference>
<dbReference type="Gene3D" id="2.60.40.60">
    <property type="entry name" value="Cadherins"/>
    <property type="match status" value="3"/>
</dbReference>
<dbReference type="Gene3D" id="4.10.900.10">
    <property type="entry name" value="TCF3-CBD (Catenin binding domain)"/>
    <property type="match status" value="1"/>
</dbReference>
<dbReference type="InterPro" id="IPR039808">
    <property type="entry name" value="Cadherin"/>
</dbReference>
<dbReference type="InterPro" id="IPR002126">
    <property type="entry name" value="Cadherin-like_dom"/>
</dbReference>
<dbReference type="InterPro" id="IPR015919">
    <property type="entry name" value="Cadherin-like_sf"/>
</dbReference>
<dbReference type="InterPro" id="IPR020894">
    <property type="entry name" value="Cadherin_CS"/>
</dbReference>
<dbReference type="InterPro" id="IPR000233">
    <property type="entry name" value="Cadherin_Y-type_LIR"/>
</dbReference>
<dbReference type="InterPro" id="IPR027397">
    <property type="entry name" value="Catenin-bd_sf"/>
</dbReference>
<dbReference type="PANTHER" id="PTHR24027">
    <property type="entry name" value="CADHERIN-23"/>
    <property type="match status" value="1"/>
</dbReference>
<dbReference type="PANTHER" id="PTHR24027:SF446">
    <property type="entry name" value="CADHERIN-3"/>
    <property type="match status" value="1"/>
</dbReference>
<dbReference type="Pfam" id="PF01049">
    <property type="entry name" value="CADH_Y-type_LIR"/>
    <property type="match status" value="1"/>
</dbReference>
<dbReference type="Pfam" id="PF00028">
    <property type="entry name" value="Cadherin"/>
    <property type="match status" value="2"/>
</dbReference>
<dbReference type="PRINTS" id="PR00205">
    <property type="entry name" value="CADHERIN"/>
</dbReference>
<dbReference type="SMART" id="SM00112">
    <property type="entry name" value="CA"/>
    <property type="match status" value="2"/>
</dbReference>
<dbReference type="SUPFAM" id="SSF49313">
    <property type="entry name" value="Cadherin-like"/>
    <property type="match status" value="3"/>
</dbReference>
<dbReference type="PROSITE" id="PS00232">
    <property type="entry name" value="CADHERIN_1"/>
    <property type="match status" value="1"/>
</dbReference>
<dbReference type="PROSITE" id="PS50268">
    <property type="entry name" value="CADHERIN_2"/>
    <property type="match status" value="2"/>
</dbReference>
<reference key="1">
    <citation type="journal article" date="1990" name="EMBO J.">
        <title>Identification and cloning of two species of cadherins in bovine endothelial cells.</title>
        <authorList>
            <person name="Liaw C.W."/>
            <person name="Cannon C."/>
            <person name="Power M.D."/>
            <person name="Kiboneka P.K."/>
            <person name="Rubin L.L."/>
        </authorList>
    </citation>
    <scope>NUCLEOTIDE SEQUENCE [MRNA]</scope>
</reference>
<keyword id="KW-0106">Calcium</keyword>
<keyword id="KW-0130">Cell adhesion</keyword>
<keyword id="KW-1003">Cell membrane</keyword>
<keyword id="KW-0325">Glycoprotein</keyword>
<keyword id="KW-0472">Membrane</keyword>
<keyword id="KW-0479">Metal-binding</keyword>
<keyword id="KW-1185">Reference proteome</keyword>
<keyword id="KW-0677">Repeat</keyword>
<keyword id="KW-0812">Transmembrane</keyword>
<keyword id="KW-1133">Transmembrane helix</keyword>
<accession>P19535</accession>
<gene>
    <name type="primary">CDH3</name>
    <name type="synonym">CDHP</name>
</gene>
<protein>
    <recommendedName>
        <fullName>Cadherin-3</fullName>
    </recommendedName>
    <alternativeName>
        <fullName>Placental cadherin</fullName>
        <shortName>P-cadherin</shortName>
    </alternativeName>
</protein>
<feature type="chain" id="PRO_0000126642" description="Cadherin-3">
    <location>
        <begin position="1" status="less than"/>
        <end position="491"/>
    </location>
</feature>
<feature type="topological domain" description="Extracellular" evidence="2">
    <location>
        <begin position="1" status="less than"/>
        <end position="316"/>
    </location>
</feature>
<feature type="transmembrane region" description="Helical" evidence="2">
    <location>
        <begin position="317"/>
        <end position="339"/>
    </location>
</feature>
<feature type="topological domain" description="Cytoplasmic" evidence="2">
    <location>
        <begin position="340"/>
        <end position="491"/>
    </location>
</feature>
<feature type="domain" description="Cadherin 3" evidence="3">
    <location>
        <begin position="1" status="less than"/>
        <end position="102"/>
    </location>
</feature>
<feature type="domain" description="Cadherin 4" evidence="3">
    <location>
        <begin position="103"/>
        <end position="208"/>
    </location>
</feature>
<feature type="domain" description="Cadherin 5" evidence="3">
    <location>
        <begin position="209"/>
        <end position="314"/>
    </location>
</feature>
<feature type="glycosylation site" description="N-linked (GlcNAc...) asparagine" evidence="2">
    <location>
        <position position="228"/>
    </location>
</feature>
<feature type="non-terminal residue">
    <location>
        <position position="1"/>
    </location>
</feature>
<organism>
    <name type="scientific">Bos taurus</name>
    <name type="common">Bovine</name>
    <dbReference type="NCBI Taxonomy" id="9913"/>
    <lineage>
        <taxon>Eukaryota</taxon>
        <taxon>Metazoa</taxon>
        <taxon>Chordata</taxon>
        <taxon>Craniata</taxon>
        <taxon>Vertebrata</taxon>
        <taxon>Euteleostomi</taxon>
        <taxon>Mammalia</taxon>
        <taxon>Eutheria</taxon>
        <taxon>Laurasiatheria</taxon>
        <taxon>Artiodactyla</taxon>
        <taxon>Ruminantia</taxon>
        <taxon>Pecora</taxon>
        <taxon>Bovidae</taxon>
        <taxon>Bovinae</taxon>
        <taxon>Bos</taxon>
    </lineage>
</organism>
<name>CADH3_BOVIN</name>
<evidence type="ECO:0000250" key="1"/>
<evidence type="ECO:0000255" key="2"/>
<evidence type="ECO:0000255" key="3">
    <source>
        <dbReference type="PROSITE-ProRule" id="PRU00043"/>
    </source>
</evidence>